<gene>
    <name type="primary">frd.3</name>
    <name type="synonym">frd3</name>
</gene>
<sequence>MAKVDIDIVDFEYIEEIIRNRYPELSITSVQDSKFWSIQIVIEGPLEDLTRFMANEYCDGMDAEDAEFYMGLIEQ</sequence>
<organism>
    <name type="scientific">Enterobacteria phage T6</name>
    <name type="common">Bacteriophage T6</name>
    <dbReference type="NCBI Taxonomy" id="10666"/>
    <lineage>
        <taxon>Viruses</taxon>
        <taxon>Duplodnaviria</taxon>
        <taxon>Heunggongvirae</taxon>
        <taxon>Uroviricota</taxon>
        <taxon>Caudoviricetes</taxon>
        <taxon>Straboviridae</taxon>
        <taxon>Tevenvirinae</taxon>
        <taxon>Tequatrovirus</taxon>
        <taxon>Tequatrovirus T6</taxon>
    </lineage>
</organism>
<organismHost>
    <name type="scientific">Escherichia coli</name>
    <dbReference type="NCBI Taxonomy" id="562"/>
</organismHost>
<dbReference type="EMBL" id="L46846">
    <property type="protein sequence ID" value="AAA74668.1"/>
    <property type="molecule type" value="Genomic_DNA"/>
</dbReference>
<dbReference type="InterPro" id="IPR008765">
    <property type="entry name" value="Phage_T4_Frd3"/>
</dbReference>
<dbReference type="Pfam" id="PF05798">
    <property type="entry name" value="Phage_FRD3"/>
    <property type="match status" value="1"/>
</dbReference>
<name>Y14E_BPT6</name>
<protein>
    <recommendedName>
        <fullName>Uncharacterized 8.8 kDa protein in frd-Gp32 intergenic region</fullName>
    </recommendedName>
</protein>
<reference key="1">
    <citation type="submission" date="1995-08" db="EMBL/GenBank/DDBJ databases">
        <title>DNA sequences of the frd region in T4-related bacteriophages.</title>
        <authorList>
            <person name="Poglazov A.B."/>
            <person name="Porter D."/>
            <person name="Kutter E.M."/>
            <person name="Mesyanzhinov V.V."/>
        </authorList>
    </citation>
    <scope>NUCLEOTIDE SEQUENCE [GENOMIC DNA]</scope>
</reference>
<accession>Q38168</accession>
<feature type="chain" id="PRO_0000165194" description="Uncharacterized 8.8 kDa protein in frd-Gp32 intergenic region">
    <location>
        <begin position="1"/>
        <end position="75"/>
    </location>
</feature>
<proteinExistence type="predicted"/>